<dbReference type="EMBL" id="X03673">
    <property type="protein sequence ID" value="CAA27308.1"/>
    <property type="molecule type" value="Genomic_RNA"/>
</dbReference>
<dbReference type="EMBL" id="M13215">
    <property type="protein sequence ID" value="AAA47215.1"/>
    <property type="molecule type" value="Genomic_RNA"/>
</dbReference>
<dbReference type="PIR" id="D26275">
    <property type="entry name" value="VHVNRV"/>
</dbReference>
<dbReference type="RefSeq" id="NP_056793.1">
    <property type="nucleotide sequence ID" value="NC_001542.1"/>
</dbReference>
<dbReference type="SMR" id="P06025"/>
<dbReference type="DrugBank" id="DB11603">
    <property type="generic name" value="Rabies immune globulin, human"/>
</dbReference>
<dbReference type="DNASU" id="1489853"/>
<dbReference type="KEGG" id="vg:1489853"/>
<dbReference type="Proteomes" id="UP000008649">
    <property type="component" value="Segment"/>
</dbReference>
<dbReference type="GO" id="GO:0019029">
    <property type="term" value="C:helical viral capsid"/>
    <property type="evidence" value="ECO:0007669"/>
    <property type="project" value="UniProtKB-KW"/>
</dbReference>
<dbReference type="GO" id="GO:0030430">
    <property type="term" value="C:host cell cytoplasm"/>
    <property type="evidence" value="ECO:0007669"/>
    <property type="project" value="UniProtKB-SubCell"/>
</dbReference>
<dbReference type="GO" id="GO:1990904">
    <property type="term" value="C:ribonucleoprotein complex"/>
    <property type="evidence" value="ECO:0007669"/>
    <property type="project" value="UniProtKB-KW"/>
</dbReference>
<dbReference type="GO" id="GO:0019013">
    <property type="term" value="C:viral nucleocapsid"/>
    <property type="evidence" value="ECO:0007669"/>
    <property type="project" value="UniProtKB-KW"/>
</dbReference>
<dbReference type="GO" id="GO:0003723">
    <property type="term" value="F:RNA binding"/>
    <property type="evidence" value="ECO:0007669"/>
    <property type="project" value="UniProtKB-KW"/>
</dbReference>
<dbReference type="Gene3D" id="1.10.3610.10">
    <property type="entry name" value="Nucleoprotein"/>
    <property type="match status" value="1"/>
</dbReference>
<dbReference type="Gene3D" id="1.10.3570.10">
    <property type="entry name" value="Rhabdovirus nucleocapsid protein like domain"/>
    <property type="match status" value="1"/>
</dbReference>
<dbReference type="InterPro" id="IPR000448">
    <property type="entry name" value="Rhabdo_ncapsid"/>
</dbReference>
<dbReference type="InterPro" id="IPR023331">
    <property type="entry name" value="Rhabdovirus_ncapsid_C"/>
</dbReference>
<dbReference type="InterPro" id="IPR023330">
    <property type="entry name" value="Rhabdovirus_ncapsid_N"/>
</dbReference>
<dbReference type="InterPro" id="IPR035961">
    <property type="entry name" value="Rhabdovirus_nucleoprotein-like"/>
</dbReference>
<dbReference type="Pfam" id="PF00945">
    <property type="entry name" value="Rhabdo_ncap"/>
    <property type="match status" value="1"/>
</dbReference>
<dbReference type="SUPFAM" id="SSF140809">
    <property type="entry name" value="Rhabdovirus nucleoprotein-like"/>
    <property type="match status" value="1"/>
</dbReference>
<gene>
    <name type="primary">N</name>
</gene>
<organism>
    <name type="scientific">Rabies virus (strain Pasteur vaccins / PV)</name>
    <name type="common">RABV</name>
    <dbReference type="NCBI Taxonomy" id="103929"/>
    <lineage>
        <taxon>Viruses</taxon>
        <taxon>Riboviria</taxon>
        <taxon>Orthornavirae</taxon>
        <taxon>Negarnaviricota</taxon>
        <taxon>Haploviricotina</taxon>
        <taxon>Monjiviricetes</taxon>
        <taxon>Mononegavirales</taxon>
        <taxon>Rhabdoviridae</taxon>
        <taxon>Alpharhabdovirinae</taxon>
        <taxon>Lyssavirus</taxon>
        <taxon>Lyssavirus rabies</taxon>
    </lineage>
</organism>
<evidence type="ECO:0000250" key="1"/>
<evidence type="ECO:0000305" key="2"/>
<protein>
    <recommendedName>
        <fullName>Nucleoprotein</fullName>
        <shortName>NP</shortName>
    </recommendedName>
    <alternativeName>
        <fullName>Nucleocapsid protein</fullName>
        <shortName>Protein N</shortName>
    </alternativeName>
</protein>
<keyword id="KW-0167">Capsid protein</keyword>
<keyword id="KW-1139">Helical capsid protein</keyword>
<keyword id="KW-1035">Host cytoplasm</keyword>
<keyword id="KW-0597">Phosphoprotein</keyword>
<keyword id="KW-1185">Reference proteome</keyword>
<keyword id="KW-0687">Ribonucleoprotein</keyword>
<keyword id="KW-0694">RNA-binding</keyword>
<keyword id="KW-0766">Superantigen</keyword>
<keyword id="KW-0543">Viral nucleoprotein</keyword>
<keyword id="KW-0946">Virion</keyword>
<name>NCAP_RABVP</name>
<sequence length="450" mass="50605">MDADKIVFKVNNQVVSLKPEIIVDQYEYKYPAIKDLKKPCITLGKAPDLNKAYKSVLSCMSAAKLDPDDVCSYLAAAMQFFEGTCPEDWTSYGIVIARKGDKITPGSLVEIKRTDVEGNWALTGGMELTRDPTVPEHASLVGLLLSLYRLSKISGQSTGNYKTNIADRIEQIFETAPFVKIVEHHTLMTTHKMCANWSTIPNFRFLAGTYDMFFSRIEHLYSAIRVGTVVTAYEDCSGLVSFTGFIKQINLTAREAILYFFHKNFEEEIRRMFEPGQETAVPHSYFIHFRSLGLSGKSPYSSNAVGHVFNLIHFVGCYMGQVRSLNATVIAACAPHEMSVLGGYLGEEFFGKGTFERRFFRDEKELQEYEAAELTKTDVALADDGTVNSDDEDYFSGETRSPEAVYTRIIMNGGRLKRSHIRRYVSVSSNHQARPNSFAEFLNKTYSSDS</sequence>
<reference key="1">
    <citation type="journal article" date="1986" name="Nucleic Acids Res.">
        <title>Primary structure of leader RNA and nucleoprotein genes of the rabies genome: segmented homology with VSV.</title>
        <authorList>
            <person name="Tordo N."/>
            <person name="Poch O."/>
            <person name="Ermine A."/>
            <person name="Keith G."/>
        </authorList>
    </citation>
    <scope>NUCLEOTIDE SEQUENCE [GENOMIC RNA]</scope>
</reference>
<reference key="2">
    <citation type="journal article" date="1986" name="Proc. Natl. Acad. Sci. U.S.A.">
        <title>Walking along the rabies genome: is the large G-L intergenic region a remnant gene?</title>
        <authorList>
            <person name="Tordo N."/>
            <person name="Poch O."/>
            <person name="Ermine A."/>
            <person name="Keith G."/>
            <person name="Rougeon F."/>
        </authorList>
    </citation>
    <scope>NUCLEOTIDE SEQUENCE [GENOMIC RNA]</scope>
</reference>
<reference key="3">
    <citation type="journal article" date="1992" name="Nature">
        <title>Evidence for a viral superantigen in humans.</title>
        <authorList>
            <person name="Lafon M."/>
            <person name="Lafage M."/>
            <person name="Martinez-Arends A."/>
            <person name="Ramirez R."/>
            <person name="Vuillier F."/>
            <person name="Charron D."/>
            <person name="Lotteau V."/>
            <person name="Scott-Algara D."/>
        </authorList>
    </citation>
    <scope>SUPERANTIGEN ACTIVITY</scope>
</reference>
<feature type="chain" id="PRO_0000222818" description="Nucleoprotein">
    <location>
        <begin position="1"/>
        <end position="450"/>
    </location>
</feature>
<feature type="modified residue" description="Phosphoserine; by host CK2" evidence="1">
    <location>
        <position position="389"/>
    </location>
</feature>
<organismHost>
    <name type="scientific">Homo sapiens</name>
    <name type="common">Human</name>
    <dbReference type="NCBI Taxonomy" id="9606"/>
</organismHost>
<organismHost>
    <name type="scientific">Mammalia</name>
    <dbReference type="NCBI Taxonomy" id="40674"/>
</organismHost>
<comment type="function">
    <text evidence="1">Encapsidates the genome in a ratio of one protein N per nine ribonucleotides, protecting it from nucleases. If expressed without protein P it binds non-specifically RNA and therefore can bind it's own mRNA. Interaction with protein P abolishes any non-specific RNA binding, and prevents phosphorylation. The soluble N-P complex encapsidates specifically the genomic RNA, with protein N protecting the genome like a pearl necklace. The encapsidated genomic RNA is termed the nucleocapsid (NC) and serves as template for viral transcription and replication. Protein N binds protein P in the NC through a different interaction, and can be phosphorylated. Subsequent viral replication is dependent on intracellular concentration of newly synthesized protein N. During replication, encapsidation by protein N is coupled to RNA synthesis and all replicative products are resistant to nucleases (By similarity).</text>
</comment>
<comment type="subunit">
    <text evidence="1">Homomultimerizes to form the nucleocapsid. Binds to viral genomic RNA. In nucleocapsid, binds protein P and thereby positions the polymerase on the template. Protein P acts as a chaperone on free protein N to prevent it from aggregation before encapsidating genomic RNA (By similarity).</text>
</comment>
<comment type="subcellular location">
    <subcellularLocation>
        <location>Virion</location>
    </subcellularLocation>
    <subcellularLocation>
        <location evidence="1">Host cytoplasm</location>
    </subcellularLocation>
</comment>
<comment type="PTM">
    <text evidence="1">Phosphorylated by host CK2. Unphosphorylated protein N seems to have a better affinity for leader viral promoter encapsidation. Phosphorylation of protein N in ribonucleocapsid may stabilize the interaction with protein P, thereby playing an important role in viral transcription/replication (By similarity).</text>
</comment>
<comment type="miscellaneous">
    <text>Displays a superantigen activity in human and mouse, activating mostly V-beta-8 subtypes of T-cell receptor.</text>
</comment>
<comment type="similarity">
    <text evidence="2">Belongs to the lyssavirus nucleocapsid protein family.</text>
</comment>
<accession>P06025</accession>
<proteinExistence type="inferred from homology"/>